<organism>
    <name type="scientific">Escherichia coli O9:H4 (strain HS)</name>
    <dbReference type="NCBI Taxonomy" id="331112"/>
    <lineage>
        <taxon>Bacteria</taxon>
        <taxon>Pseudomonadati</taxon>
        <taxon>Pseudomonadota</taxon>
        <taxon>Gammaproteobacteria</taxon>
        <taxon>Enterobacterales</taxon>
        <taxon>Enterobacteriaceae</taxon>
        <taxon>Escherichia</taxon>
    </lineage>
</organism>
<protein>
    <recommendedName>
        <fullName evidence="1">Threonine/serine transporter TdcC</fullName>
    </recommendedName>
    <alternativeName>
        <fullName evidence="1">H(+)/threonine-serine symporter</fullName>
    </alternativeName>
</protein>
<proteinExistence type="inferred from homology"/>
<reference key="1">
    <citation type="journal article" date="2008" name="J. Bacteriol.">
        <title>The pangenome structure of Escherichia coli: comparative genomic analysis of E. coli commensal and pathogenic isolates.</title>
        <authorList>
            <person name="Rasko D.A."/>
            <person name="Rosovitz M.J."/>
            <person name="Myers G.S.A."/>
            <person name="Mongodin E.F."/>
            <person name="Fricke W.F."/>
            <person name="Gajer P."/>
            <person name="Crabtree J."/>
            <person name="Sebaihia M."/>
            <person name="Thomson N.R."/>
            <person name="Chaudhuri R."/>
            <person name="Henderson I.R."/>
            <person name="Sperandio V."/>
            <person name="Ravel J."/>
        </authorList>
    </citation>
    <scope>NUCLEOTIDE SEQUENCE [LARGE SCALE GENOMIC DNA]</scope>
    <source>
        <strain>HS</strain>
    </source>
</reference>
<accession>A8A4S9</accession>
<name>TDCC_ECOHS</name>
<feature type="chain" id="PRO_1000069290" description="Threonine/serine transporter TdcC">
    <location>
        <begin position="1"/>
        <end position="443"/>
    </location>
</feature>
<feature type="transmembrane region" description="Helical" evidence="1">
    <location>
        <begin position="22"/>
        <end position="42"/>
    </location>
</feature>
<feature type="transmembrane region" description="Helical" evidence="1">
    <location>
        <begin position="44"/>
        <end position="64"/>
    </location>
</feature>
<feature type="transmembrane region" description="Helical" evidence="1">
    <location>
        <begin position="97"/>
        <end position="117"/>
    </location>
</feature>
<feature type="transmembrane region" description="Helical" evidence="1">
    <location>
        <begin position="140"/>
        <end position="160"/>
    </location>
</feature>
<feature type="transmembrane region" description="Helical" evidence="1">
    <location>
        <begin position="163"/>
        <end position="183"/>
    </location>
</feature>
<feature type="transmembrane region" description="Helical" evidence="1">
    <location>
        <begin position="207"/>
        <end position="227"/>
    </location>
</feature>
<feature type="transmembrane region" description="Helical" evidence="1">
    <location>
        <begin position="261"/>
        <end position="281"/>
    </location>
</feature>
<feature type="transmembrane region" description="Helical" evidence="1">
    <location>
        <begin position="311"/>
        <end position="331"/>
    </location>
</feature>
<feature type="transmembrane region" description="Helical" evidence="1">
    <location>
        <begin position="366"/>
        <end position="386"/>
    </location>
</feature>
<feature type="transmembrane region" description="Helical" evidence="1">
    <location>
        <begin position="389"/>
        <end position="409"/>
    </location>
</feature>
<feature type="transmembrane region" description="Helical" evidence="1">
    <location>
        <begin position="423"/>
        <end position="443"/>
    </location>
</feature>
<evidence type="ECO:0000255" key="1">
    <source>
        <dbReference type="HAMAP-Rule" id="MF_01583"/>
    </source>
</evidence>
<gene>
    <name evidence="1" type="primary">tdcC</name>
    <name type="ordered locus">EcHS_A3304</name>
</gene>
<dbReference type="EMBL" id="CP000802">
    <property type="protein sequence ID" value="ABV07533.1"/>
    <property type="molecule type" value="Genomic_DNA"/>
</dbReference>
<dbReference type="RefSeq" id="WP_000107723.1">
    <property type="nucleotide sequence ID" value="NC_009800.1"/>
</dbReference>
<dbReference type="SMR" id="A8A4S9"/>
<dbReference type="GeneID" id="93778869"/>
<dbReference type="KEGG" id="ecx:EcHS_A3304"/>
<dbReference type="HOGENOM" id="CLU_052043_1_1_6"/>
<dbReference type="GO" id="GO:0005886">
    <property type="term" value="C:plasma membrane"/>
    <property type="evidence" value="ECO:0007669"/>
    <property type="project" value="UniProtKB-SubCell"/>
</dbReference>
<dbReference type="GO" id="GO:0015194">
    <property type="term" value="F:L-serine transmembrane transporter activity"/>
    <property type="evidence" value="ECO:0007669"/>
    <property type="project" value="InterPro"/>
</dbReference>
<dbReference type="GO" id="GO:0015293">
    <property type="term" value="F:symporter activity"/>
    <property type="evidence" value="ECO:0007669"/>
    <property type="project" value="UniProtKB-UniRule"/>
</dbReference>
<dbReference type="GO" id="GO:0015565">
    <property type="term" value="F:threonine efflux transmembrane transporter activity"/>
    <property type="evidence" value="ECO:0007669"/>
    <property type="project" value="InterPro"/>
</dbReference>
<dbReference type="HAMAP" id="MF_01583">
    <property type="entry name" value="Thr_Ser_transp_TdcC"/>
    <property type="match status" value="1"/>
</dbReference>
<dbReference type="InterPro" id="IPR018227">
    <property type="entry name" value="Amino_acid_transport_2"/>
</dbReference>
<dbReference type="InterPro" id="IPR004694">
    <property type="entry name" value="Hydroxy_aa_transpt"/>
</dbReference>
<dbReference type="InterPro" id="IPR023726">
    <property type="entry name" value="Thr/Ser_transpt_TdcC"/>
</dbReference>
<dbReference type="NCBIfam" id="NF010152">
    <property type="entry name" value="PRK13629.1"/>
    <property type="match status" value="1"/>
</dbReference>
<dbReference type="NCBIfam" id="TIGR00814">
    <property type="entry name" value="stp"/>
    <property type="match status" value="1"/>
</dbReference>
<dbReference type="PANTHER" id="PTHR35334">
    <property type="entry name" value="SERINE TRANSPORTER"/>
    <property type="match status" value="1"/>
</dbReference>
<dbReference type="PANTHER" id="PTHR35334:SF1">
    <property type="entry name" value="THREONINE_SERINE TRANSPORTER TDCC"/>
    <property type="match status" value="1"/>
</dbReference>
<dbReference type="Pfam" id="PF03222">
    <property type="entry name" value="Trp_Tyr_perm"/>
    <property type="match status" value="1"/>
</dbReference>
<comment type="function">
    <text evidence="1">Involved in the import of threonine and serine into the cell, with the concomitant import of a proton (symport system).</text>
</comment>
<comment type="catalytic activity">
    <reaction evidence="1">
        <text>L-threonine(in) + H(+)(in) = L-threonine(out) + H(+)(out)</text>
        <dbReference type="Rhea" id="RHEA:28883"/>
        <dbReference type="ChEBI" id="CHEBI:15378"/>
        <dbReference type="ChEBI" id="CHEBI:57926"/>
    </reaction>
    <physiologicalReaction direction="right-to-left" evidence="1">
        <dbReference type="Rhea" id="RHEA:28885"/>
    </physiologicalReaction>
</comment>
<comment type="catalytic activity">
    <reaction evidence="1">
        <text>L-serine(in) + H(+)(in) = L-serine(out) + H(+)(out)</text>
        <dbReference type="Rhea" id="RHEA:28887"/>
        <dbReference type="ChEBI" id="CHEBI:15378"/>
        <dbReference type="ChEBI" id="CHEBI:33384"/>
    </reaction>
    <physiologicalReaction direction="right-to-left" evidence="1">
        <dbReference type="Rhea" id="RHEA:28889"/>
    </physiologicalReaction>
</comment>
<comment type="subcellular location">
    <subcellularLocation>
        <location evidence="1">Cell inner membrane</location>
        <topology evidence="1">Multi-pass membrane protein</topology>
    </subcellularLocation>
</comment>
<comment type="similarity">
    <text evidence="1">Belongs to the amino acid/polyamine transporter 2 family. SdaC/TdcC subfamily.</text>
</comment>
<keyword id="KW-0029">Amino-acid transport</keyword>
<keyword id="KW-0997">Cell inner membrane</keyword>
<keyword id="KW-1003">Cell membrane</keyword>
<keyword id="KW-0472">Membrane</keyword>
<keyword id="KW-0769">Symport</keyword>
<keyword id="KW-0812">Transmembrane</keyword>
<keyword id="KW-1133">Transmembrane helix</keyword>
<keyword id="KW-0813">Transport</keyword>
<sequence length="443" mass="48879">MSTSDSIVSSQTKQSSWRKSDTTWTLGLFGTAIGAGVLFFPIRAGFGGLIPILLMLVLAYPIAFYCHRALARLCLSGSNPSGNITETVEEHFGKTGGVVITFLYFFAICPLLWIYGVTITNTFMTFWENQLGFAPLNRGFVALFLLLLMAFVIWFGKDLMVKVMSYLVWPFIASLVLISLSLIPYWNSAVIDQVDLGSLSLTGHDGILITVWLGISIMVFSFNFSPIVSSFVVSKREEYEKDFGRDFTERKCSQIISRASMLMVAVVMFFAFSCLFTLSPANMAEAKAQNIPVLSYLANHFASMTGTKTTFAITLEYAASIIALVAIFKSFFGHYLGTLEGLNGLVLKFGYKGDKTKVSLGKLNTISMIFIMGSTWVVAYANPNILDLIEAMGAPIIASLLCLLPMYAIRKAPSLAKYRGRLDNVFVTVIGLLTILNIVYKLF</sequence>